<proteinExistence type="evidence at protein level"/>
<comment type="function">
    <text evidence="5">Involved in the synthesis of the GDP-mannose and dolichol-phosphate-mannose required for a number of critical mannosyl transfer reactions such as folding and glycosylation of secretory proteins in the ER lumen.</text>
</comment>
<comment type="catalytic activity">
    <reaction evidence="5">
        <text>alpha-D-mannose 1-phosphate = D-mannose 6-phosphate</text>
        <dbReference type="Rhea" id="RHEA:11140"/>
        <dbReference type="ChEBI" id="CHEBI:58409"/>
        <dbReference type="ChEBI" id="CHEBI:58735"/>
        <dbReference type="EC" id="5.4.2.8"/>
    </reaction>
    <physiologicalReaction direction="right-to-left" evidence="11">
        <dbReference type="Rhea" id="RHEA:11142"/>
    </physiologicalReaction>
</comment>
<comment type="pathway">
    <text evidence="11">Nucleotide-sugar biosynthesis; GDP-alpha-D-mannose biosynthesis; alpha-D-mannose 1-phosphate from D-fructose 6-phosphate: step 2/2.</text>
</comment>
<comment type="subunit">
    <text evidence="5">Homodimer.</text>
</comment>
<comment type="subcellular location">
    <subcellularLocation>
        <location evidence="6">Cytoplasm</location>
    </subcellularLocation>
</comment>
<comment type="miscellaneous">
    <text evidence="3">Present with 3500 molecules/cell in log phase SD medium.</text>
</comment>
<comment type="similarity">
    <text evidence="10">Belongs to the eukaryotic PMM family.</text>
</comment>
<gene>
    <name evidence="8" type="primary">SEC53</name>
    <name evidence="9" type="synonym">ALG4</name>
    <name type="ordered locus">YFL045C</name>
</gene>
<sequence length="254" mass="29063">MSIAEFAYKEKPETLVLFDVDGTLTPARLTVSEEVRKTLAKLRNKCCIGFVGGSDLSKQLEQLGPNVLDEFDYSFSENGLTAYRLGKELASQSFINWLGEEKYNKLAVFILRYLSEIDLPKRRGTFLEFRNGMINVSPIGRNASTEERNEFERYDKEHQIRAKFVEALKKEFPDYGLTFSIGGQISFDVFPAGWDKTYCLQHVEKDGFKEIHFFGDKTMVGGNDYEIFVDERTIGHSVQSPDDTVKILTELFNL</sequence>
<name>PMM_YEAST</name>
<protein>
    <recommendedName>
        <fullName evidence="7">Phosphomannomutase</fullName>
        <shortName>PMM</shortName>
        <ecNumber evidence="5">5.4.2.8</ecNumber>
    </recommendedName>
    <alternativeName>
        <fullName evidence="9">Asparagine-linked glycosylation protein 4</fullName>
    </alternativeName>
</protein>
<dbReference type="EC" id="5.4.2.8" evidence="5"/>
<dbReference type="EMBL" id="X03213">
    <property type="protein sequence ID" value="CAA26957.1"/>
    <property type="molecule type" value="Genomic_DNA"/>
</dbReference>
<dbReference type="EMBL" id="AJ585720">
    <property type="protein sequence ID" value="CAE52240.1"/>
    <property type="molecule type" value="Genomic_DNA"/>
</dbReference>
<dbReference type="EMBL" id="AJ585721">
    <property type="protein sequence ID" value="CAE52241.1"/>
    <property type="molecule type" value="Genomic_DNA"/>
</dbReference>
<dbReference type="EMBL" id="AJ585722">
    <property type="protein sequence ID" value="CAE52242.1"/>
    <property type="molecule type" value="Genomic_DNA"/>
</dbReference>
<dbReference type="EMBL" id="AJ585723">
    <property type="protein sequence ID" value="CAE52243.1"/>
    <property type="molecule type" value="Genomic_DNA"/>
</dbReference>
<dbReference type="EMBL" id="AJ585724">
    <property type="protein sequence ID" value="CAE52244.1"/>
    <property type="molecule type" value="Genomic_DNA"/>
</dbReference>
<dbReference type="EMBL" id="AJ585725">
    <property type="protein sequence ID" value="CAE52245.1"/>
    <property type="molecule type" value="Genomic_DNA"/>
</dbReference>
<dbReference type="EMBL" id="AJ585726">
    <property type="protein sequence ID" value="CAE52246.1"/>
    <property type="molecule type" value="Genomic_DNA"/>
</dbReference>
<dbReference type="EMBL" id="AJ585727">
    <property type="protein sequence ID" value="CAE52247.1"/>
    <property type="molecule type" value="Genomic_DNA"/>
</dbReference>
<dbReference type="EMBL" id="AJ585728">
    <property type="protein sequence ID" value="CAE52248.1"/>
    <property type="molecule type" value="Genomic_DNA"/>
</dbReference>
<dbReference type="EMBL" id="AJ585729">
    <property type="protein sequence ID" value="CAE52249.1"/>
    <property type="molecule type" value="Genomic_DNA"/>
</dbReference>
<dbReference type="EMBL" id="AJ585730">
    <property type="protein sequence ID" value="CAE52250.1"/>
    <property type="molecule type" value="Genomic_DNA"/>
</dbReference>
<dbReference type="EMBL" id="AJ585731">
    <property type="protein sequence ID" value="CAE52251.1"/>
    <property type="molecule type" value="Genomic_DNA"/>
</dbReference>
<dbReference type="EMBL" id="AJ585732">
    <property type="protein sequence ID" value="CAE52252.1"/>
    <property type="molecule type" value="Genomic_DNA"/>
</dbReference>
<dbReference type="EMBL" id="AJ585733">
    <property type="protein sequence ID" value="CAE52253.1"/>
    <property type="molecule type" value="Genomic_DNA"/>
</dbReference>
<dbReference type="EMBL" id="AJ585734">
    <property type="protein sequence ID" value="CAE52254.1"/>
    <property type="molecule type" value="Genomic_DNA"/>
</dbReference>
<dbReference type="EMBL" id="AJ585735">
    <property type="protein sequence ID" value="CAE52255.1"/>
    <property type="molecule type" value="Genomic_DNA"/>
</dbReference>
<dbReference type="EMBL" id="D50617">
    <property type="protein sequence ID" value="BAA09196.1"/>
    <property type="molecule type" value="Genomic_DNA"/>
</dbReference>
<dbReference type="EMBL" id="AY692959">
    <property type="protein sequence ID" value="AAT92978.1"/>
    <property type="molecule type" value="Genomic_DNA"/>
</dbReference>
<dbReference type="EMBL" id="BK006940">
    <property type="protein sequence ID" value="DAA12395.1"/>
    <property type="molecule type" value="Genomic_DNA"/>
</dbReference>
<dbReference type="PIR" id="S05874">
    <property type="entry name" value="BVBY53"/>
</dbReference>
<dbReference type="RefSeq" id="NP_116609.1">
    <property type="nucleotide sequence ID" value="NM_001179922.1"/>
</dbReference>
<dbReference type="SMR" id="P07283"/>
<dbReference type="BioGRID" id="31102">
    <property type="interactions" value="309"/>
</dbReference>
<dbReference type="DIP" id="DIP-4312N"/>
<dbReference type="FunCoup" id="P07283">
    <property type="interactions" value="916"/>
</dbReference>
<dbReference type="IntAct" id="P07283">
    <property type="interactions" value="37"/>
</dbReference>
<dbReference type="MINT" id="P07283"/>
<dbReference type="STRING" id="4932.YFL045C"/>
<dbReference type="iPTMnet" id="P07283"/>
<dbReference type="PaxDb" id="4932-YFL045C"/>
<dbReference type="PeptideAtlas" id="P07283"/>
<dbReference type="EnsemblFungi" id="YFL045C_mRNA">
    <property type="protein sequence ID" value="YFL045C"/>
    <property type="gene ID" value="YFL045C"/>
</dbReference>
<dbReference type="GeneID" id="850499"/>
<dbReference type="KEGG" id="sce:YFL045C"/>
<dbReference type="AGR" id="SGD:S000001849"/>
<dbReference type="SGD" id="S000001849">
    <property type="gene designation" value="SEC53"/>
</dbReference>
<dbReference type="VEuPathDB" id="FungiDB:YFL045C"/>
<dbReference type="eggNOG" id="KOG3189">
    <property type="taxonomic scope" value="Eukaryota"/>
</dbReference>
<dbReference type="GeneTree" id="ENSGT00390000002918"/>
<dbReference type="HOGENOM" id="CLU_065642_0_1_1"/>
<dbReference type="InParanoid" id="P07283"/>
<dbReference type="OMA" id="ISHRVYT"/>
<dbReference type="OrthoDB" id="10264771at2759"/>
<dbReference type="BioCyc" id="YEAST:YFL045C-MONOMER"/>
<dbReference type="Reactome" id="R-SCE-446205">
    <property type="pathway name" value="Synthesis of GDP-mannose"/>
</dbReference>
<dbReference type="UniPathway" id="UPA00126">
    <property type="reaction ID" value="UER00424"/>
</dbReference>
<dbReference type="BioGRID-ORCS" id="850499">
    <property type="hits" value="1 hit in 10 CRISPR screens"/>
</dbReference>
<dbReference type="CD-CODE" id="E03F929F">
    <property type="entry name" value="Stress granule"/>
</dbReference>
<dbReference type="PRO" id="PR:P07283"/>
<dbReference type="Proteomes" id="UP000002311">
    <property type="component" value="Chromosome VI"/>
</dbReference>
<dbReference type="RNAct" id="P07283">
    <property type="molecule type" value="protein"/>
</dbReference>
<dbReference type="GO" id="GO:0010494">
    <property type="term" value="C:cytoplasmic stress granule"/>
    <property type="evidence" value="ECO:0007005"/>
    <property type="project" value="SGD"/>
</dbReference>
<dbReference type="GO" id="GO:0005829">
    <property type="term" value="C:cytosol"/>
    <property type="evidence" value="ECO:0000314"/>
    <property type="project" value="SGD"/>
</dbReference>
<dbReference type="GO" id="GO:0046872">
    <property type="term" value="F:metal ion binding"/>
    <property type="evidence" value="ECO:0007669"/>
    <property type="project" value="UniProtKB-KW"/>
</dbReference>
<dbReference type="GO" id="GO:0004615">
    <property type="term" value="F:phosphomannomutase activity"/>
    <property type="evidence" value="ECO:0000314"/>
    <property type="project" value="SGD"/>
</dbReference>
<dbReference type="GO" id="GO:0009298">
    <property type="term" value="P:GDP-mannose biosynthetic process"/>
    <property type="evidence" value="ECO:0007669"/>
    <property type="project" value="UniProtKB-UniPathway"/>
</dbReference>
<dbReference type="GO" id="GO:0006013">
    <property type="term" value="P:mannose metabolic process"/>
    <property type="evidence" value="ECO:0000318"/>
    <property type="project" value="GO_Central"/>
</dbReference>
<dbReference type="GO" id="GO:0006487">
    <property type="term" value="P:protein N-linked glycosylation"/>
    <property type="evidence" value="ECO:0000318"/>
    <property type="project" value="GO_Central"/>
</dbReference>
<dbReference type="CDD" id="cd02585">
    <property type="entry name" value="HAD_PMM"/>
    <property type="match status" value="1"/>
</dbReference>
<dbReference type="FunFam" id="3.30.1240.20:FF:000001">
    <property type="entry name" value="Phosphomannomutase"/>
    <property type="match status" value="1"/>
</dbReference>
<dbReference type="FunFam" id="3.40.50.1000:FF:000216">
    <property type="entry name" value="Phosphomannomutase"/>
    <property type="match status" value="1"/>
</dbReference>
<dbReference type="Gene3D" id="3.30.1240.20">
    <property type="match status" value="1"/>
</dbReference>
<dbReference type="Gene3D" id="3.40.50.1000">
    <property type="entry name" value="HAD superfamily/HAD-like"/>
    <property type="match status" value="1"/>
</dbReference>
<dbReference type="InterPro" id="IPR036412">
    <property type="entry name" value="HAD-like_sf"/>
</dbReference>
<dbReference type="InterPro" id="IPR006379">
    <property type="entry name" value="HAD-SF_hydro_IIB"/>
</dbReference>
<dbReference type="InterPro" id="IPR023214">
    <property type="entry name" value="HAD_sf"/>
</dbReference>
<dbReference type="InterPro" id="IPR005002">
    <property type="entry name" value="PMM"/>
</dbReference>
<dbReference type="InterPro" id="IPR043169">
    <property type="entry name" value="PMM_cap"/>
</dbReference>
<dbReference type="NCBIfam" id="TIGR01484">
    <property type="entry name" value="HAD-SF-IIB"/>
    <property type="match status" value="1"/>
</dbReference>
<dbReference type="PANTHER" id="PTHR10466">
    <property type="entry name" value="PHOSPHOMANNOMUTASE"/>
    <property type="match status" value="1"/>
</dbReference>
<dbReference type="PANTHER" id="PTHR10466:SF0">
    <property type="entry name" value="PHOSPHOMANNOMUTASE"/>
    <property type="match status" value="1"/>
</dbReference>
<dbReference type="Pfam" id="PF03332">
    <property type="entry name" value="PMM"/>
    <property type="match status" value="1"/>
</dbReference>
<dbReference type="SFLD" id="SFLDF00445">
    <property type="entry name" value="alpha-phosphomannomutase"/>
    <property type="match status" value="1"/>
</dbReference>
<dbReference type="SFLD" id="SFLDS00003">
    <property type="entry name" value="Haloacid_Dehalogenase"/>
    <property type="match status" value="1"/>
</dbReference>
<dbReference type="SUPFAM" id="SSF56784">
    <property type="entry name" value="HAD-like"/>
    <property type="match status" value="1"/>
</dbReference>
<reference key="1">
    <citation type="journal article" date="1985" name="J. Cell Biol.">
        <title>Characterization of a gene product (Sec53p) required for protein assembly in the yeast endoplasmic reticulum.</title>
        <authorList>
            <person name="Bernstein M."/>
            <person name="Hoffmann W."/>
            <person name="Ammerer G."/>
            <person name="Schekman R."/>
        </authorList>
    </citation>
    <scope>NUCLEOTIDE SEQUENCE [GENOMIC DNA]</scope>
    <scope>SUBCELLULAR LOCATION</scope>
</reference>
<reference key="2">
    <citation type="journal article" date="2004" name="Nucleic Acids Res.">
        <title>Differential evolution of the Saccharomyces cerevisiae DUP240 paralogs and implication of recombination in phylogeny.</title>
        <authorList>
            <person name="Leh-Louis V."/>
            <person name="Wirth B."/>
            <person name="Despons L."/>
            <person name="Wain-Hobson S."/>
            <person name="Potier S."/>
            <person name="Souciet J.-L."/>
        </authorList>
    </citation>
    <scope>NUCLEOTIDE SEQUENCE [GENOMIC DNA]</scope>
    <scope>VARIANTS THR-234 AND ILE-249</scope>
    <source>
        <strain>CLIB 219</strain>
        <strain>CLIB 382</strain>
        <strain>CLIB 388</strain>
        <strain>CLIB 410</strain>
        <strain>CLIB 413</strain>
        <strain>CLIB 556</strain>
        <strain>CLIB 630</strain>
        <strain>CLIB 95</strain>
        <strain>K1</strain>
        <strain>R12</strain>
        <strain>R13</strain>
        <strain>Sigma 1278B</strain>
        <strain>YIIc12</strain>
        <strain>YIIc17</strain>
    </source>
</reference>
<reference key="3">
    <citation type="journal article" date="1995" name="Nat. Genet.">
        <title>Analysis of the nucleotide sequence of chromosome VI from Saccharomyces cerevisiae.</title>
        <authorList>
            <person name="Murakami Y."/>
            <person name="Naitou M."/>
            <person name="Hagiwara H."/>
            <person name="Shibata T."/>
            <person name="Ozawa M."/>
            <person name="Sasanuma S."/>
            <person name="Sasanuma M."/>
            <person name="Tsuchiya Y."/>
            <person name="Soeda E."/>
            <person name="Yokoyama K."/>
            <person name="Yamazaki M."/>
            <person name="Tashiro H."/>
            <person name="Eki T."/>
        </authorList>
    </citation>
    <scope>NUCLEOTIDE SEQUENCE [LARGE SCALE GENOMIC DNA]</scope>
    <source>
        <strain>ATCC 204508 / S288c</strain>
    </source>
</reference>
<reference key="4">
    <citation type="journal article" date="2014" name="G3 (Bethesda)">
        <title>The reference genome sequence of Saccharomyces cerevisiae: Then and now.</title>
        <authorList>
            <person name="Engel S.R."/>
            <person name="Dietrich F.S."/>
            <person name="Fisk D.G."/>
            <person name="Binkley G."/>
            <person name="Balakrishnan R."/>
            <person name="Costanzo M.C."/>
            <person name="Dwight S.S."/>
            <person name="Hitz B.C."/>
            <person name="Karra K."/>
            <person name="Nash R.S."/>
            <person name="Weng S."/>
            <person name="Wong E.D."/>
            <person name="Lloyd P."/>
            <person name="Skrzypek M.S."/>
            <person name="Miyasato S.R."/>
            <person name="Simison M."/>
            <person name="Cherry J.M."/>
        </authorList>
    </citation>
    <scope>GENOME REANNOTATION</scope>
    <source>
        <strain>ATCC 204508 / S288c</strain>
    </source>
</reference>
<reference key="5">
    <citation type="journal article" date="2007" name="Genome Res.">
        <title>Approaching a complete repository of sequence-verified protein-encoding clones for Saccharomyces cerevisiae.</title>
        <authorList>
            <person name="Hu Y."/>
            <person name="Rolfs A."/>
            <person name="Bhullar B."/>
            <person name="Murthy T.V.S."/>
            <person name="Zhu C."/>
            <person name="Berger M.F."/>
            <person name="Camargo A.A."/>
            <person name="Kelley F."/>
            <person name="McCarron S."/>
            <person name="Jepson D."/>
            <person name="Richardson A."/>
            <person name="Raphael J."/>
            <person name="Moreira D."/>
            <person name="Taycher E."/>
            <person name="Zuo D."/>
            <person name="Mohr S."/>
            <person name="Kane M.F."/>
            <person name="Williamson J."/>
            <person name="Simpson A.J.G."/>
            <person name="Bulyk M.L."/>
            <person name="Harlow E."/>
            <person name="Marsischky G."/>
            <person name="Kolodner R.D."/>
            <person name="LaBaer J."/>
        </authorList>
    </citation>
    <scope>NUCLEOTIDE SEQUENCE [GENOMIC DNA]</scope>
    <source>
        <strain>ATCC 204508 / S288c</strain>
    </source>
</reference>
<reference key="6">
    <citation type="journal article" date="1982" name="J. Biol. Chem.">
        <title>Temperature-sensitive yeast mutants deficient in asparagine-linked glycosylation.</title>
        <authorList>
            <person name="Huffaker T.C."/>
            <person name="Robbins P.W."/>
        </authorList>
    </citation>
    <scope>GENE NAME</scope>
</reference>
<reference key="7">
    <citation type="journal article" date="1988" name="J. Biol. Chem.">
        <title>The yeast SEC53 gene encodes phosphomannomutase.</title>
        <authorList>
            <person name="Kepes F."/>
            <person name="Schekman R."/>
        </authorList>
    </citation>
    <scope>FUNCTION</scope>
    <scope>CATALYTIC ACTIVITY</scope>
    <scope>PATHWAY</scope>
    <scope>SUBUNIT</scope>
</reference>
<reference key="8">
    <citation type="journal article" date="2003" name="Nature">
        <title>Global analysis of protein expression in yeast.</title>
        <authorList>
            <person name="Ghaemmaghami S."/>
            <person name="Huh W.-K."/>
            <person name="Bower K."/>
            <person name="Howson R.W."/>
            <person name="Belle A."/>
            <person name="Dephoure N."/>
            <person name="O'Shea E.K."/>
            <person name="Weissman J.S."/>
        </authorList>
    </citation>
    <scope>LEVEL OF PROTEIN EXPRESSION [LARGE SCALE ANALYSIS]</scope>
</reference>
<reference key="9">
    <citation type="journal article" date="2007" name="J. Proteome Res.">
        <title>Large-scale phosphorylation analysis of alpha-factor-arrested Saccharomyces cerevisiae.</title>
        <authorList>
            <person name="Li X."/>
            <person name="Gerber S.A."/>
            <person name="Rudner A.D."/>
            <person name="Beausoleil S.A."/>
            <person name="Haas W."/>
            <person name="Villen J."/>
            <person name="Elias J.E."/>
            <person name="Gygi S.P."/>
        </authorList>
    </citation>
    <scope>PHOSPHORYLATION [LARGE SCALE ANALYSIS] AT SER-240</scope>
    <scope>IDENTIFICATION BY MASS SPECTROMETRY [LARGE SCALE ANALYSIS]</scope>
    <source>
        <strain>ADR376</strain>
    </source>
</reference>
<reference key="10">
    <citation type="journal article" date="2009" name="Science">
        <title>Global analysis of Cdk1 substrate phosphorylation sites provides insights into evolution.</title>
        <authorList>
            <person name="Holt L.J."/>
            <person name="Tuch B.B."/>
            <person name="Villen J."/>
            <person name="Johnson A.D."/>
            <person name="Gygi S.P."/>
            <person name="Morgan D.O."/>
        </authorList>
    </citation>
    <scope>PHOSPHORYLATION [LARGE SCALE ANALYSIS] AT SER-240</scope>
    <scope>IDENTIFICATION BY MASS SPECTROMETRY [LARGE SCALE ANALYSIS]</scope>
</reference>
<feature type="chain" id="PRO_0000199703" description="Phosphomannomutase">
    <location>
        <begin position="1"/>
        <end position="254"/>
    </location>
</feature>
<feature type="active site" description="Nucleophile" evidence="2">
    <location>
        <position position="19"/>
    </location>
</feature>
<feature type="active site" description="Proton donor/acceptor" evidence="2">
    <location>
        <position position="21"/>
    </location>
</feature>
<feature type="binding site" evidence="1">
    <location>
        <position position="19"/>
    </location>
    <ligand>
        <name>Mg(2+)</name>
        <dbReference type="ChEBI" id="CHEBI:18420"/>
        <label>1</label>
    </ligand>
</feature>
<feature type="binding site" evidence="1">
    <location>
        <position position="21"/>
    </location>
    <ligand>
        <name>Mg(2+)</name>
        <dbReference type="ChEBI" id="CHEBI:18420"/>
        <label>1</label>
    </ligand>
</feature>
<feature type="binding site" evidence="2">
    <location>
        <position position="28"/>
    </location>
    <ligand>
        <name>alpha-D-mannose 1-phosphate</name>
        <dbReference type="ChEBI" id="CHEBI:58409"/>
    </ligand>
</feature>
<feature type="binding site" evidence="2">
    <location>
        <position position="130"/>
    </location>
    <ligand>
        <name>alpha-D-mannose 1-phosphate</name>
        <dbReference type="ChEBI" id="CHEBI:58409"/>
    </ligand>
</feature>
<feature type="binding site" evidence="2">
    <location>
        <position position="141"/>
    </location>
    <ligand>
        <name>alpha-D-mannose 1-phosphate</name>
        <dbReference type="ChEBI" id="CHEBI:58409"/>
    </ligand>
</feature>
<feature type="binding site" evidence="2">
    <location>
        <position position="148"/>
    </location>
    <ligand>
        <name>alpha-D-mannose 1-phosphate</name>
        <dbReference type="ChEBI" id="CHEBI:58409"/>
    </ligand>
</feature>
<feature type="binding site" evidence="2">
    <location>
        <position position="186"/>
    </location>
    <ligand>
        <name>alpha-D-mannose 1-phosphate</name>
        <dbReference type="ChEBI" id="CHEBI:58409"/>
    </ligand>
</feature>
<feature type="binding site" evidence="2">
    <location>
        <position position="188"/>
    </location>
    <ligand>
        <name>alpha-D-mannose 1-phosphate</name>
        <dbReference type="ChEBI" id="CHEBI:58409"/>
    </ligand>
</feature>
<feature type="binding site" evidence="1">
    <location>
        <position position="216"/>
    </location>
    <ligand>
        <name>Mg(2+)</name>
        <dbReference type="ChEBI" id="CHEBI:18420"/>
        <label>1</label>
    </ligand>
</feature>
<feature type="binding site" evidence="2">
    <location>
        <position position="228"/>
    </location>
    <ligand>
        <name>Mg(2+)</name>
        <dbReference type="ChEBI" id="CHEBI:18420"/>
        <label>2</label>
    </ligand>
</feature>
<feature type="binding site" evidence="1">
    <location>
        <position position="230"/>
    </location>
    <ligand>
        <name>Mg(2+)</name>
        <dbReference type="ChEBI" id="CHEBI:18420"/>
        <label>2</label>
    </ligand>
</feature>
<feature type="binding site" evidence="1">
    <location>
        <position position="233"/>
    </location>
    <ligand>
        <name>Mg(2+)</name>
        <dbReference type="ChEBI" id="CHEBI:18420"/>
        <label>2</label>
    </ligand>
</feature>
<feature type="modified residue" description="Phosphoserine" evidence="12 13">
    <location>
        <position position="240"/>
    </location>
</feature>
<feature type="sequence variant" description="In strain: CLIB 556 haplotype Ha1." evidence="4">
    <original>I</original>
    <variation>T</variation>
    <location>
        <position position="234"/>
    </location>
</feature>
<feature type="sequence variant" description="In strain: R12 haplotype Ha1." evidence="4">
    <original>T</original>
    <variation>I</variation>
    <location>
        <position position="249"/>
    </location>
</feature>
<organism>
    <name type="scientific">Saccharomyces cerevisiae (strain ATCC 204508 / S288c)</name>
    <name type="common">Baker's yeast</name>
    <dbReference type="NCBI Taxonomy" id="559292"/>
    <lineage>
        <taxon>Eukaryota</taxon>
        <taxon>Fungi</taxon>
        <taxon>Dikarya</taxon>
        <taxon>Ascomycota</taxon>
        <taxon>Saccharomycotina</taxon>
        <taxon>Saccharomycetes</taxon>
        <taxon>Saccharomycetales</taxon>
        <taxon>Saccharomycetaceae</taxon>
        <taxon>Saccharomyces</taxon>
    </lineage>
</organism>
<evidence type="ECO:0000250" key="1">
    <source>
        <dbReference type="UniProtKB" id="P31353"/>
    </source>
</evidence>
<evidence type="ECO:0000250" key="2">
    <source>
        <dbReference type="UniProtKB" id="Q92871"/>
    </source>
</evidence>
<evidence type="ECO:0000269" key="3">
    <source>
    </source>
</evidence>
<evidence type="ECO:0000269" key="4">
    <source>
    </source>
</evidence>
<evidence type="ECO:0000269" key="5">
    <source>
    </source>
</evidence>
<evidence type="ECO:0000269" key="6">
    <source>
    </source>
</evidence>
<evidence type="ECO:0000303" key="7">
    <source>
    </source>
</evidence>
<evidence type="ECO:0000303" key="8">
    <source>
    </source>
</evidence>
<evidence type="ECO:0000303" key="9">
    <source>
    </source>
</evidence>
<evidence type="ECO:0000305" key="10"/>
<evidence type="ECO:0000305" key="11">
    <source>
    </source>
</evidence>
<evidence type="ECO:0007744" key="12">
    <source>
    </source>
</evidence>
<evidence type="ECO:0007744" key="13">
    <source>
    </source>
</evidence>
<keyword id="KW-0963">Cytoplasm</keyword>
<keyword id="KW-0413">Isomerase</keyword>
<keyword id="KW-0460">Magnesium</keyword>
<keyword id="KW-0479">Metal-binding</keyword>
<keyword id="KW-0597">Phosphoprotein</keyword>
<keyword id="KW-1185">Reference proteome</keyword>
<accession>P07283</accession>
<accession>D6VTI5</accession>
<accession>Q70D76</accession>
<accession>Q70D77</accession>